<evidence type="ECO:0000250" key="1"/>
<evidence type="ECO:0000305" key="2"/>
<protein>
    <recommendedName>
        <fullName>Sphingomyelinase C</fullName>
        <shortName>SMase</shortName>
        <ecNumber>3.1.4.12</ecNumber>
    </recommendedName>
    <alternativeName>
        <fullName>Cereolysin B</fullName>
    </alternativeName>
    <alternativeName>
        <fullName>SMPLC</fullName>
    </alternativeName>
    <alternativeName>
        <fullName>Sphingomyelin phosphodiesterase</fullName>
    </alternativeName>
</protein>
<name>PHL1_BACCE</name>
<sequence>MKGKLLKGVLSFGIGLGVLYGGSSVQADTSTDQNNTLKVMTHNVYMLSTNLYPNWGQSQRADLIGAADYIKNQDVVILNEVFDNSASDRLLGNLKKEYPNQTAVLGRSNGNEWDKTLGSYSSSTPEDGGVAIVSKWPIVEKIQYVFAKGCGPDNLSNKGFVYTKIKKNDRFVHVIGTHLQAEDSMCGKTSPASVRTNQLKEIQDFIKNKNIPNDEYVLFGGDMNVNKINAENNSDSEYASMFKTLHASIPSYTGHTATWDATTNSIAKYNFPDSPAEYLDYIIASKDHANPSFIENKVLQPKSPQWTVTSWLKKYTYDDYSDHYPVAATISMK</sequence>
<feature type="signal peptide">
    <location>
        <begin position="1"/>
        <end position="27"/>
    </location>
</feature>
<feature type="chain" id="PRO_0000019899" description="Sphingomyelinase C">
    <location>
        <begin position="28"/>
        <end position="333"/>
    </location>
</feature>
<feature type="disulfide bond" evidence="1">
    <location>
        <begin position="150"/>
        <end position="186"/>
    </location>
</feature>
<reference key="1">
    <citation type="journal article" date="1988" name="Nucleic Acids Res.">
        <title>Bacillus cereus strain SE-1: nucleotide sequence of the sphingomyelinase C gene.</title>
        <authorList>
            <person name="Johansen T."/>
            <person name="Haugli F.B."/>
            <person name="Ikezawa H."/>
            <person name="Little C."/>
        </authorList>
    </citation>
    <scope>NUCLEOTIDE SEQUENCE [GENOMIC DNA]</scope>
    <source>
        <strain>SE-1</strain>
    </source>
</reference>
<reference key="2">
    <citation type="journal article" date="1993" name="Bioorg. Khim.">
        <title>Nucleotide sequence of phospholipase C and sphingomyelinase genes from Bacillus cereus BKM-B164.</title>
        <authorList>
            <person name="Kuzmin N.P."/>
            <person name="Gavrilenko I.V."/>
            <person name="Krukov V.M."/>
            <person name="Karpov A.V."/>
        </authorList>
    </citation>
    <scope>NUCLEOTIDE SEQUENCE [GENOMIC DNA]</scope>
    <source>
        <strain>VKM B-164</strain>
    </source>
</reference>
<reference key="3">
    <citation type="journal article" date="1988" name="Gene">
        <title>Cloning and sequencing of the gene encoding the phosphatidylcholine-preferring phospholipase C of Bacillus cereus.</title>
        <authorList>
            <person name="Johansen T."/>
            <person name="Holm T."/>
            <person name="Guddal P.H."/>
            <person name="Sletten K."/>
            <person name="Haugli F.B."/>
            <person name="Little C."/>
        </authorList>
    </citation>
    <scope>NUCLEOTIDE SEQUENCE [GENOMIC DNA] OF 1-188</scope>
    <source>
        <strain>SE-1</strain>
    </source>
</reference>
<organism>
    <name type="scientific">Bacillus cereus</name>
    <dbReference type="NCBI Taxonomy" id="1396"/>
    <lineage>
        <taxon>Bacteria</taxon>
        <taxon>Bacillati</taxon>
        <taxon>Bacillota</taxon>
        <taxon>Bacilli</taxon>
        <taxon>Bacillales</taxon>
        <taxon>Bacillaceae</taxon>
        <taxon>Bacillus</taxon>
        <taxon>Bacillus cereus group</taxon>
    </lineage>
</organism>
<keyword id="KW-0204">Cytolysis</keyword>
<keyword id="KW-1015">Disulfide bond</keyword>
<keyword id="KW-0354">Hemolysis</keyword>
<keyword id="KW-0378">Hydrolase</keyword>
<keyword id="KW-0964">Secreted</keyword>
<keyword id="KW-0732">Signal</keyword>
<proteinExistence type="inferred from homology"/>
<accession>P09599</accession>
<comment type="function">
    <text>Required, with sphingomyelinase, to effect target cell lysis (hemolysis).</text>
</comment>
<comment type="catalytic activity">
    <reaction>
        <text>a sphingomyelin + H2O = phosphocholine + an N-acylsphing-4-enine + H(+)</text>
        <dbReference type="Rhea" id="RHEA:19253"/>
        <dbReference type="ChEBI" id="CHEBI:15377"/>
        <dbReference type="ChEBI" id="CHEBI:15378"/>
        <dbReference type="ChEBI" id="CHEBI:17636"/>
        <dbReference type="ChEBI" id="CHEBI:52639"/>
        <dbReference type="ChEBI" id="CHEBI:295975"/>
        <dbReference type="EC" id="3.1.4.12"/>
    </reaction>
</comment>
<comment type="cofactor">
    <cofactor>
        <name>Mg(2+)</name>
        <dbReference type="ChEBI" id="CHEBI:18420"/>
    </cofactor>
</comment>
<comment type="activity regulation">
    <text>Activated by cobalt and manganese ions.</text>
</comment>
<comment type="subcellular location">
    <subcellularLocation>
        <location>Secreted</location>
    </subcellularLocation>
</comment>
<comment type="similarity">
    <text evidence="2">Belongs to the neutral sphingomyelinase family.</text>
</comment>
<comment type="sequence caution" evidence="2">
    <conflict type="erroneous initiation">
        <sequence resource="EMBL-CDS" id="CAA45501"/>
    </conflict>
</comment>
<dbReference type="EC" id="3.1.4.12"/>
<dbReference type="EMBL" id="X64141">
    <property type="protein sequence ID" value="CAA45503.1"/>
    <property type="molecule type" value="Genomic_DNA"/>
</dbReference>
<dbReference type="EMBL" id="X12854">
    <property type="protein sequence ID" value="CAA31333.1"/>
    <property type="molecule type" value="Genomic_DNA"/>
</dbReference>
<dbReference type="EMBL" id="X64140">
    <property type="protein sequence ID" value="CAA45501.1"/>
    <property type="status" value="ALT_INIT"/>
    <property type="molecule type" value="Genomic_DNA"/>
</dbReference>
<dbReference type="PIR" id="S01950">
    <property type="entry name" value="S01950"/>
</dbReference>
<dbReference type="SMR" id="P09599"/>
<dbReference type="eggNOG" id="COG3568">
    <property type="taxonomic scope" value="Bacteria"/>
</dbReference>
<dbReference type="BRENDA" id="3.1.4.12">
    <property type="organism ID" value="648"/>
</dbReference>
<dbReference type="SABIO-RK" id="P09599"/>
<dbReference type="GO" id="GO:0005576">
    <property type="term" value="C:extracellular region"/>
    <property type="evidence" value="ECO:0007669"/>
    <property type="project" value="UniProtKB-SubCell"/>
</dbReference>
<dbReference type="GO" id="GO:0004767">
    <property type="term" value="F:sphingomyelin phosphodiesterase activity"/>
    <property type="evidence" value="ECO:0007669"/>
    <property type="project" value="UniProtKB-EC"/>
</dbReference>
<dbReference type="GO" id="GO:0031640">
    <property type="term" value="P:killing of cells of another organism"/>
    <property type="evidence" value="ECO:0007669"/>
    <property type="project" value="UniProtKB-KW"/>
</dbReference>
<dbReference type="CDD" id="cd09078">
    <property type="entry name" value="nSMase"/>
    <property type="match status" value="1"/>
</dbReference>
<dbReference type="FunFam" id="3.60.10.10:FF:000063">
    <property type="entry name" value="Sphingomyelinase C"/>
    <property type="match status" value="1"/>
</dbReference>
<dbReference type="Gene3D" id="3.60.10.10">
    <property type="entry name" value="Endonuclease/exonuclease/phosphatase"/>
    <property type="match status" value="1"/>
</dbReference>
<dbReference type="InterPro" id="IPR036691">
    <property type="entry name" value="Endo/exonu/phosph_ase_sf"/>
</dbReference>
<dbReference type="InterPro" id="IPR005135">
    <property type="entry name" value="Endo/exonuclease/phosphatase"/>
</dbReference>
<dbReference type="InterPro" id="IPR038772">
    <property type="entry name" value="Sph/SMPD2-like"/>
</dbReference>
<dbReference type="InterPro" id="IPR017766">
    <property type="entry name" value="Sphingomyelinase/PLipase_C"/>
</dbReference>
<dbReference type="NCBIfam" id="TIGR03395">
    <property type="entry name" value="sphingomy"/>
    <property type="match status" value="1"/>
</dbReference>
<dbReference type="PANTHER" id="PTHR16320:SF23">
    <property type="entry name" value="SPHINGOMYELINASE C 1"/>
    <property type="match status" value="1"/>
</dbReference>
<dbReference type="PANTHER" id="PTHR16320">
    <property type="entry name" value="SPHINGOMYELINASE FAMILY MEMBER"/>
    <property type="match status" value="1"/>
</dbReference>
<dbReference type="Pfam" id="PF03372">
    <property type="entry name" value="Exo_endo_phos"/>
    <property type="match status" value="1"/>
</dbReference>
<dbReference type="SUPFAM" id="SSF56219">
    <property type="entry name" value="DNase I-like"/>
    <property type="match status" value="1"/>
</dbReference>
<gene>
    <name type="primary">sph</name>
</gene>